<comment type="subunit">
    <text evidence="1">Toroid-shaped homohexamer that has a central cavity of about 38 Angstroms diameter.</text>
</comment>
<comment type="domain">
    <text evidence="1">Is organized into three distinct structural domains with interconnecting topological connectivities. The two NIF3 domains at the N- and C-terminus of the protein have the same overall fold as canonical NIF3-like proteins. The middle region of the polypeptide (residues 126-236) bulges out between the two NIF3 domains and is structured as a classical PII-like fold. The two entries to the central hollow space are capped by the two PII-like domain trimers. The trimeric PII domain may play a ligand induced signaling role and probably regulates the function of the NIF3-like domains.</text>
</comment>
<comment type="similarity">
    <text evidence="2">Belongs to the GTP cyclohydrolase I type 2/NIF3 family.</text>
</comment>
<sequence length="366" mass="41075">MKIADLMTLLDHHVPFSTAESWDNVGLLIGDGDVEVTGVLTALDCTLEVVNEAIEKGYNTIISHHPLIFKGVTSLKANGYGLIIRKLIQHDINLIAMHTNLDVNPYGVNMMLAKAMGLKNISIINNQQDVYYKVQTYIPKDNVGPFKDKLSENGLAQEGNYEYCFFESEGRGQFKPVGEANPTIGQIDKIEDVDEVKIEFMIDAYQKSRAEQLIKQYHPYETPVFDFIEIKQTSLYGLGVMAEVDNQMTLEDFAADIKSKLNIPSVRFVGESNQKIKRIAIIGGSGIGYEYQAVQQGADVFVTGDIKHHDALDAKIHGVNLIDINHYSEYVMKEGLKTLLMNWFNIEKINIDVEASTINTDPFQYI</sequence>
<protein>
    <recommendedName>
        <fullName>GTP cyclohydrolase 1 type 2 homolog</fullName>
    </recommendedName>
</protein>
<name>GCH1L_STAAM</name>
<feature type="chain" id="PRO_0000147328" description="GTP cyclohydrolase 1 type 2 homolog">
    <location>
        <begin position="1"/>
        <end position="366"/>
    </location>
</feature>
<feature type="binding site" evidence="1">
    <location>
        <position position="64"/>
    </location>
    <ligand>
        <name>Zn(2+)</name>
        <dbReference type="ChEBI" id="CHEBI:29105"/>
        <label>1</label>
    </ligand>
</feature>
<feature type="binding site" evidence="1">
    <location>
        <position position="65"/>
    </location>
    <ligand>
        <name>Zn(2+)</name>
        <dbReference type="ChEBI" id="CHEBI:29105"/>
        <label>2</label>
    </ligand>
</feature>
<feature type="binding site" evidence="1">
    <location>
        <position position="102"/>
    </location>
    <ligand>
        <name>Zn(2+)</name>
        <dbReference type="ChEBI" id="CHEBI:29105"/>
        <label>1</label>
    </ligand>
</feature>
<feature type="binding site" evidence="1">
    <location>
        <position position="326"/>
    </location>
    <ligand>
        <name>Zn(2+)</name>
        <dbReference type="ChEBI" id="CHEBI:29105"/>
        <label>2</label>
    </ligand>
</feature>
<feature type="binding site" evidence="1">
    <location>
        <position position="329"/>
    </location>
    <ligand>
        <name>Zn(2+)</name>
        <dbReference type="ChEBI" id="CHEBI:29105"/>
        <label>1</label>
    </ligand>
</feature>
<feature type="binding site" evidence="1">
    <location>
        <position position="329"/>
    </location>
    <ligand>
        <name>Zn(2+)</name>
        <dbReference type="ChEBI" id="CHEBI:29105"/>
        <label>2</label>
    </ligand>
</feature>
<dbReference type="EMBL" id="BA000017">
    <property type="protein sequence ID" value="BAB57721.1"/>
    <property type="molecule type" value="Genomic_DNA"/>
</dbReference>
<dbReference type="RefSeq" id="WP_000683940.1">
    <property type="nucleotide sequence ID" value="NC_002758.2"/>
</dbReference>
<dbReference type="PDB" id="2NYD">
    <property type="method" value="X-ray"/>
    <property type="resolution" value="2.00 A"/>
    <property type="chains" value="A/B=1-366"/>
</dbReference>
<dbReference type="PDB" id="3LNL">
    <property type="method" value="X-ray"/>
    <property type="resolution" value="2.00 A"/>
    <property type="chains" value="A/B=1-366"/>
</dbReference>
<dbReference type="PDBsum" id="2NYD"/>
<dbReference type="PDBsum" id="3LNL"/>
<dbReference type="SMR" id="P67272"/>
<dbReference type="KEGG" id="sav:SAV1559"/>
<dbReference type="HOGENOM" id="CLU_037423_1_0_9"/>
<dbReference type="PhylomeDB" id="P67272"/>
<dbReference type="Proteomes" id="UP000002481">
    <property type="component" value="Chromosome"/>
</dbReference>
<dbReference type="GO" id="GO:0005737">
    <property type="term" value="C:cytoplasm"/>
    <property type="evidence" value="ECO:0007669"/>
    <property type="project" value="TreeGrafter"/>
</dbReference>
<dbReference type="GO" id="GO:0046872">
    <property type="term" value="F:metal ion binding"/>
    <property type="evidence" value="ECO:0007669"/>
    <property type="project" value="UniProtKB-KW"/>
</dbReference>
<dbReference type="FunFam" id="3.40.1390.30:FF:000001">
    <property type="entry name" value="GTP cyclohydrolase 1 type 2"/>
    <property type="match status" value="1"/>
</dbReference>
<dbReference type="FunFam" id="3.30.70.120:FF:000006">
    <property type="entry name" value="GTP cyclohydrolase 1 type 2 homolog"/>
    <property type="match status" value="1"/>
</dbReference>
<dbReference type="Gene3D" id="3.30.70.120">
    <property type="match status" value="1"/>
</dbReference>
<dbReference type="Gene3D" id="3.40.1390.30">
    <property type="entry name" value="NIF3 (NGG1p interacting factor 3)-like"/>
    <property type="match status" value="1"/>
</dbReference>
<dbReference type="InterPro" id="IPR002678">
    <property type="entry name" value="DUF34/NIF3"/>
</dbReference>
<dbReference type="InterPro" id="IPR017221">
    <property type="entry name" value="DUF34/NIF3_bac"/>
</dbReference>
<dbReference type="InterPro" id="IPR036069">
    <property type="entry name" value="DUF34/NIF3_sf"/>
</dbReference>
<dbReference type="InterPro" id="IPR015867">
    <property type="entry name" value="N-reg_PII/ATP_PRibTrfase_C"/>
</dbReference>
<dbReference type="NCBIfam" id="TIGR00486">
    <property type="entry name" value="YbgI_SA1388"/>
    <property type="match status" value="1"/>
</dbReference>
<dbReference type="PANTHER" id="PTHR13799:SF14">
    <property type="entry name" value="GTP CYCLOHYDROLASE 1 TYPE 2 HOMOLOG"/>
    <property type="match status" value="1"/>
</dbReference>
<dbReference type="PANTHER" id="PTHR13799">
    <property type="entry name" value="NGG1 INTERACTING FACTOR 3"/>
    <property type="match status" value="1"/>
</dbReference>
<dbReference type="Pfam" id="PF01784">
    <property type="entry name" value="DUF34_NIF3"/>
    <property type="match status" value="1"/>
</dbReference>
<dbReference type="PIRSF" id="PIRSF037489">
    <property type="entry name" value="UCP037489_NIF3_YqfO"/>
    <property type="match status" value="1"/>
</dbReference>
<dbReference type="SUPFAM" id="SSF102705">
    <property type="entry name" value="NIF3 (NGG1p interacting factor 3)-like"/>
    <property type="match status" value="1"/>
</dbReference>
<proteinExistence type="evidence at protein level"/>
<evidence type="ECO:0000269" key="1">
    <source>
    </source>
</evidence>
<evidence type="ECO:0000305" key="2"/>
<reference key="1">
    <citation type="journal article" date="2001" name="Lancet">
        <title>Whole genome sequencing of meticillin-resistant Staphylococcus aureus.</title>
        <authorList>
            <person name="Kuroda M."/>
            <person name="Ohta T."/>
            <person name="Uchiyama I."/>
            <person name="Baba T."/>
            <person name="Yuzawa H."/>
            <person name="Kobayashi I."/>
            <person name="Cui L."/>
            <person name="Oguchi A."/>
            <person name="Aoki K."/>
            <person name="Nagai Y."/>
            <person name="Lian J.-Q."/>
            <person name="Ito T."/>
            <person name="Kanamori M."/>
            <person name="Matsumaru H."/>
            <person name="Maruyama A."/>
            <person name="Murakami H."/>
            <person name="Hosoyama A."/>
            <person name="Mizutani-Ui Y."/>
            <person name="Takahashi N.K."/>
            <person name="Sawano T."/>
            <person name="Inoue R."/>
            <person name="Kaito C."/>
            <person name="Sekimizu K."/>
            <person name="Hirakawa H."/>
            <person name="Kuhara S."/>
            <person name="Goto S."/>
            <person name="Yabuzaki J."/>
            <person name="Kanehisa M."/>
            <person name="Yamashita A."/>
            <person name="Oshima K."/>
            <person name="Furuya K."/>
            <person name="Yoshino C."/>
            <person name="Shiba T."/>
            <person name="Hattori M."/>
            <person name="Ogasawara N."/>
            <person name="Hayashi H."/>
            <person name="Hiramatsu K."/>
        </authorList>
    </citation>
    <scope>NUCLEOTIDE SEQUENCE [LARGE SCALE GENOMIC DNA]</scope>
    <source>
        <strain>Mu50 / ATCC 700699</strain>
    </source>
</reference>
<reference key="2">
    <citation type="journal article" date="2006" name="BMC Struct. Biol.">
        <title>Structure of a conserved hypothetical protein SA1388 from S. aureus reveals a capped hexameric toroid with two PII domain lids and a dinuclear metal center.</title>
        <authorList>
            <person name="Saikatendu K.S."/>
            <person name="Zhang X."/>
            <person name="Kinch L."/>
            <person name="Leybourne M."/>
            <person name="Grishin N.V."/>
            <person name="Zhang H."/>
        </authorList>
    </citation>
    <scope>X-RAY CRYSTALLOGRAPHY (2.0 ANGSTROMS) IN COMPLEX WITH ZINC IONS</scope>
    <scope>SUBUNIT</scope>
    <scope>DOMAIN</scope>
    <source>
        <strain>Mu50 / ATCC 700699</strain>
    </source>
</reference>
<accession>P67272</accession>
<accession>Q99TT7</accession>
<keyword id="KW-0002">3D-structure</keyword>
<keyword id="KW-0479">Metal-binding</keyword>
<keyword id="KW-0862">Zinc</keyword>
<organism>
    <name type="scientific">Staphylococcus aureus (strain Mu50 / ATCC 700699)</name>
    <dbReference type="NCBI Taxonomy" id="158878"/>
    <lineage>
        <taxon>Bacteria</taxon>
        <taxon>Bacillati</taxon>
        <taxon>Bacillota</taxon>
        <taxon>Bacilli</taxon>
        <taxon>Bacillales</taxon>
        <taxon>Staphylococcaceae</taxon>
        <taxon>Staphylococcus</taxon>
    </lineage>
</organism>
<gene>
    <name type="ordered locus">SAV1559</name>
</gene>